<name>XERDL_STRP8</name>
<accession>Q8P2D0</accession>
<sequence length="248" mass="28817">MKSYIEPFIASKALSQNSQKAYRYDLQQFCQLVGERVNQDKLLLYQNSIANLSLSAKKRKLSTANQFLYYLYQIKYLNSYFRLTDTMKVMRTEKQQAAIINTDIFYQKTPFVWGQLISLLILELGLTPSEVAGIEVANLDLNFQMLTLKTKKGVRVLPLSQILIPFLEQQLVGKEVYLFEHRGIPFSRQWFFNHLKTFVRSIGYEGLTAQKLREQFILKEKLAGKSIIELSDILGLKSPVTLEKYYKS</sequence>
<reference key="1">
    <citation type="journal article" date="2002" name="Proc. Natl. Acad. Sci. U.S.A.">
        <title>Genome sequence and comparative microarray analysis of serotype M18 group A Streptococcus strains associated with acute rheumatic fever outbreaks.</title>
        <authorList>
            <person name="Smoot J.C."/>
            <person name="Barbian K.D."/>
            <person name="Van Gompel J.J."/>
            <person name="Smoot L.M."/>
            <person name="Chaussee M.S."/>
            <person name="Sylva G.L."/>
            <person name="Sturdevant D.E."/>
            <person name="Ricklefs S.M."/>
            <person name="Porcella S.F."/>
            <person name="Parkins L.D."/>
            <person name="Beres S.B."/>
            <person name="Campbell D.S."/>
            <person name="Smith T.M."/>
            <person name="Zhang Q."/>
            <person name="Kapur V."/>
            <person name="Daly J.A."/>
            <person name="Veasy L.G."/>
            <person name="Musser J.M."/>
        </authorList>
    </citation>
    <scope>NUCLEOTIDE SEQUENCE [LARGE SCALE GENOMIC DNA]</scope>
    <source>
        <strain>MGAS8232</strain>
    </source>
</reference>
<organism>
    <name type="scientific">Streptococcus pyogenes serotype M18 (strain MGAS8232)</name>
    <dbReference type="NCBI Taxonomy" id="186103"/>
    <lineage>
        <taxon>Bacteria</taxon>
        <taxon>Bacillati</taxon>
        <taxon>Bacillota</taxon>
        <taxon>Bacilli</taxon>
        <taxon>Lactobacillales</taxon>
        <taxon>Streptococcaceae</taxon>
        <taxon>Streptococcus</taxon>
    </lineage>
</organism>
<proteinExistence type="inferred from homology"/>
<evidence type="ECO:0000255" key="1">
    <source>
        <dbReference type="HAMAP-Rule" id="MF_01817"/>
    </source>
</evidence>
<evidence type="ECO:0000255" key="2">
    <source>
        <dbReference type="PROSITE-ProRule" id="PRU01246"/>
    </source>
</evidence>
<evidence type="ECO:0000255" key="3">
    <source>
        <dbReference type="PROSITE-ProRule" id="PRU01248"/>
    </source>
</evidence>
<feature type="chain" id="PRO_0000095445" description="Tyrosine recombinase XerD-like">
    <location>
        <begin position="1"/>
        <end position="248"/>
    </location>
</feature>
<feature type="domain" description="Core-binding (CB)" evidence="3">
    <location>
        <begin position="1"/>
        <end position="72"/>
    </location>
</feature>
<feature type="domain" description="Tyr recombinase" evidence="2">
    <location>
        <begin position="85"/>
        <end position="248"/>
    </location>
</feature>
<feature type="active site" evidence="2">
    <location>
        <position position="149"/>
    </location>
</feature>
<feature type="active site" evidence="2">
    <location>
        <position position="213"/>
    </location>
</feature>
<feature type="active site" description="O-(3'-phospho-DNA)-tyrosine intermediate" evidence="2">
    <location>
        <position position="245"/>
    </location>
</feature>
<comment type="function">
    <text evidence="1">Putative tyrosine recombinase. Not involved in the cutting and rejoining of the recombining DNA molecules on dif(SL) site.</text>
</comment>
<comment type="subcellular location">
    <subcellularLocation>
        <location evidence="1">Cytoplasm</location>
    </subcellularLocation>
</comment>
<comment type="similarity">
    <text evidence="1">Belongs to the 'phage' integrase family. XerD-like subfamily.</text>
</comment>
<protein>
    <recommendedName>
        <fullName evidence="1">Tyrosine recombinase XerD-like</fullName>
    </recommendedName>
</protein>
<keyword id="KW-0963">Cytoplasm</keyword>
<keyword id="KW-0229">DNA integration</keyword>
<keyword id="KW-0233">DNA recombination</keyword>
<keyword id="KW-0238">DNA-binding</keyword>
<dbReference type="EMBL" id="AE009949">
    <property type="protein sequence ID" value="AAL97158.1"/>
    <property type="molecule type" value="Genomic_DNA"/>
</dbReference>
<dbReference type="SMR" id="Q8P2D0"/>
<dbReference type="KEGG" id="spm:spyM18_0415"/>
<dbReference type="HOGENOM" id="CLU_1128554_0_0_9"/>
<dbReference type="GO" id="GO:0005737">
    <property type="term" value="C:cytoplasm"/>
    <property type="evidence" value="ECO:0007669"/>
    <property type="project" value="UniProtKB-SubCell"/>
</dbReference>
<dbReference type="GO" id="GO:0003677">
    <property type="term" value="F:DNA binding"/>
    <property type="evidence" value="ECO:0007669"/>
    <property type="project" value="UniProtKB-KW"/>
</dbReference>
<dbReference type="GO" id="GO:0009037">
    <property type="term" value="F:tyrosine-based site-specific recombinase activity"/>
    <property type="evidence" value="ECO:0007669"/>
    <property type="project" value="UniProtKB-UniRule"/>
</dbReference>
<dbReference type="GO" id="GO:0006313">
    <property type="term" value="P:DNA transposition"/>
    <property type="evidence" value="ECO:0007669"/>
    <property type="project" value="UniProtKB-UniRule"/>
</dbReference>
<dbReference type="CDD" id="cd01190">
    <property type="entry name" value="INT_StrepXerD_C_like"/>
    <property type="match status" value="1"/>
</dbReference>
<dbReference type="Gene3D" id="1.10.150.130">
    <property type="match status" value="1"/>
</dbReference>
<dbReference type="Gene3D" id="1.10.443.10">
    <property type="entry name" value="Intergrase catalytic core"/>
    <property type="match status" value="1"/>
</dbReference>
<dbReference type="HAMAP" id="MF_01817">
    <property type="entry name" value="Recomb_XerD_like"/>
    <property type="match status" value="1"/>
</dbReference>
<dbReference type="InterPro" id="IPR044068">
    <property type="entry name" value="CB"/>
</dbReference>
<dbReference type="InterPro" id="IPR011010">
    <property type="entry name" value="DNA_brk_join_enz"/>
</dbReference>
<dbReference type="InterPro" id="IPR013762">
    <property type="entry name" value="Integrase-like_cat_sf"/>
</dbReference>
<dbReference type="InterPro" id="IPR002104">
    <property type="entry name" value="Integrase_catalytic"/>
</dbReference>
<dbReference type="InterPro" id="IPR010998">
    <property type="entry name" value="Integrase_recombinase_N"/>
</dbReference>
<dbReference type="InterPro" id="IPR020876">
    <property type="entry name" value="Tyrosine_recombinase_XerD-like"/>
</dbReference>
<dbReference type="NCBIfam" id="NF002685">
    <property type="entry name" value="PRK02436.1"/>
    <property type="match status" value="1"/>
</dbReference>
<dbReference type="SUPFAM" id="SSF56349">
    <property type="entry name" value="DNA breaking-rejoining enzymes"/>
    <property type="match status" value="1"/>
</dbReference>
<dbReference type="PROSITE" id="PS51900">
    <property type="entry name" value="CB"/>
    <property type="match status" value="1"/>
</dbReference>
<dbReference type="PROSITE" id="PS51898">
    <property type="entry name" value="TYR_RECOMBINASE"/>
    <property type="match status" value="1"/>
</dbReference>
<gene>
    <name type="ordered locus">spyM18_0415</name>
</gene>